<sequence length="587" mass="66237">MSSSSSITTTLPLCTNKSLSSSFTTTNSSLLSKPSQLFLHGRRNQSFKVSCNANNVDKNPDAVDRRNVLLGLGGLYGAANLAPLATAAPIPPPDLKSCGTAHVKEGVDVIYSCCPPVPDDIDSVPYYKFPSMTKLRIRPPAHAADEEYVAKYQLATSRMRELDKDPFDPLGFKQQANIHCAYCNGAYKVGGKELQVHFSWLFFPFHRWYLYFYERILGSLINDPTFALPYWNWDHPKGMRIPPMFDREGSSLYDEKRNQNHRNGTIIDLGHFGKEVDTPQLQIMTNNLTLMYRQMVTNAPCPSQFFGAAYPLGSEPSPGQGTIENIPHTPVHIWTGDKPRQKNGEDMGNFYSAGLDPIFYCHHANVDRMWNEWKLIGGKRRDLTDKDWLNSEFFFYDENRNPYRVKVRDCLDSKKMGFDYAPMPTPWRNFKPIRKSSSGKVNTASIAPVSKVFPLAKLDRAISFSITRPASSRTTQEKNEQEEILTFNKISYDDRNYVRFDVFLNVDKTVNADELDKAEFAGSYTSLPHVHGSNTNHVTSLTFKLAITELLEDIGLEDEDTIAVTLVPKAGGEEVSIESVEIKLEDC</sequence>
<dbReference type="EC" id="1.10.3.1"/>
<dbReference type="EMBL" id="Z12837">
    <property type="protein sequence ID" value="CAA78299.1"/>
    <property type="molecule type" value="Genomic_DNA"/>
</dbReference>
<dbReference type="EMBL" id="S40548">
    <property type="protein sequence ID" value="AAB22610.1"/>
    <property type="molecule type" value="Genomic_DNA"/>
</dbReference>
<dbReference type="PIR" id="S33543">
    <property type="entry name" value="S33543"/>
</dbReference>
<dbReference type="SMR" id="Q08307"/>
<dbReference type="STRING" id="4081.Q08307"/>
<dbReference type="PaxDb" id="4081-Solyc08g074620.1.1"/>
<dbReference type="eggNOG" id="ENOG502QVBP">
    <property type="taxonomic scope" value="Eukaryota"/>
</dbReference>
<dbReference type="InParanoid" id="Q08307"/>
<dbReference type="BioCyc" id="MetaCyc:MONOMER-16342"/>
<dbReference type="Proteomes" id="UP000004994">
    <property type="component" value="Unplaced"/>
</dbReference>
<dbReference type="ExpressionAtlas" id="Q08307">
    <property type="expression patterns" value="baseline and differential"/>
</dbReference>
<dbReference type="GO" id="GO:0009543">
    <property type="term" value="C:chloroplast thylakoid lumen"/>
    <property type="evidence" value="ECO:0007669"/>
    <property type="project" value="UniProtKB-SubCell"/>
</dbReference>
<dbReference type="GO" id="GO:0004097">
    <property type="term" value="F:catechol oxidase activity"/>
    <property type="evidence" value="ECO:0007669"/>
    <property type="project" value="UniProtKB-EC"/>
</dbReference>
<dbReference type="GO" id="GO:0046872">
    <property type="term" value="F:metal ion binding"/>
    <property type="evidence" value="ECO:0007669"/>
    <property type="project" value="UniProtKB-KW"/>
</dbReference>
<dbReference type="GO" id="GO:0046148">
    <property type="term" value="P:pigment biosynthetic process"/>
    <property type="evidence" value="ECO:0007669"/>
    <property type="project" value="InterPro"/>
</dbReference>
<dbReference type="Gene3D" id="1.10.1280.10">
    <property type="entry name" value="Di-copper center containing domain from catechol oxidase"/>
    <property type="match status" value="1"/>
</dbReference>
<dbReference type="InterPro" id="IPR008922">
    <property type="entry name" value="Di-copper_centre_dom_sf"/>
</dbReference>
<dbReference type="InterPro" id="IPR016213">
    <property type="entry name" value="Polyphenol_oxidase"/>
</dbReference>
<dbReference type="InterPro" id="IPR022740">
    <property type="entry name" value="Polyphenol_oxidase_C"/>
</dbReference>
<dbReference type="InterPro" id="IPR022739">
    <property type="entry name" value="Polyphenol_oxidase_cen"/>
</dbReference>
<dbReference type="InterPro" id="IPR050316">
    <property type="entry name" value="Tyrosinase/Hemocyanin"/>
</dbReference>
<dbReference type="InterPro" id="IPR002227">
    <property type="entry name" value="Tyrosinase_Cu-bd"/>
</dbReference>
<dbReference type="PANTHER" id="PTHR11474:SF92">
    <property type="entry name" value="POLYPHENOL OXIDASE F, CHLOROPLASTIC"/>
    <property type="match status" value="1"/>
</dbReference>
<dbReference type="PANTHER" id="PTHR11474">
    <property type="entry name" value="TYROSINASE FAMILY MEMBER"/>
    <property type="match status" value="1"/>
</dbReference>
<dbReference type="Pfam" id="PF12142">
    <property type="entry name" value="PPO1_DWL"/>
    <property type="match status" value="1"/>
</dbReference>
<dbReference type="Pfam" id="PF12143">
    <property type="entry name" value="PPO1_KFDV"/>
    <property type="match status" value="1"/>
</dbReference>
<dbReference type="Pfam" id="PF00264">
    <property type="entry name" value="Tyrosinase"/>
    <property type="match status" value="1"/>
</dbReference>
<dbReference type="PIRSF" id="PIRSF000290">
    <property type="entry name" value="PPO_plant"/>
    <property type="match status" value="1"/>
</dbReference>
<dbReference type="PRINTS" id="PR00092">
    <property type="entry name" value="TYROSINASE"/>
</dbReference>
<dbReference type="SUPFAM" id="SSF48056">
    <property type="entry name" value="Di-copper centre-containing domain"/>
    <property type="match status" value="1"/>
</dbReference>
<dbReference type="PROSITE" id="PS00497">
    <property type="entry name" value="TYROSINASE_1"/>
    <property type="match status" value="1"/>
</dbReference>
<dbReference type="PROSITE" id="PS00498">
    <property type="entry name" value="TYROSINASE_2"/>
    <property type="match status" value="1"/>
</dbReference>
<organism>
    <name type="scientific">Solanum lycopersicum</name>
    <name type="common">Tomato</name>
    <name type="synonym">Lycopersicon esculentum</name>
    <dbReference type="NCBI Taxonomy" id="4081"/>
    <lineage>
        <taxon>Eukaryota</taxon>
        <taxon>Viridiplantae</taxon>
        <taxon>Streptophyta</taxon>
        <taxon>Embryophyta</taxon>
        <taxon>Tracheophyta</taxon>
        <taxon>Spermatophyta</taxon>
        <taxon>Magnoliopsida</taxon>
        <taxon>eudicotyledons</taxon>
        <taxon>Gunneridae</taxon>
        <taxon>Pentapetalae</taxon>
        <taxon>asterids</taxon>
        <taxon>lamiids</taxon>
        <taxon>Solanales</taxon>
        <taxon>Solanaceae</taxon>
        <taxon>Solanoideae</taxon>
        <taxon>Solaneae</taxon>
        <taxon>Solanum</taxon>
        <taxon>Solanum subgen. Lycopersicon</taxon>
    </lineage>
</organism>
<name>PPOE_SOLLC</name>
<protein>
    <recommendedName>
        <fullName>Polyphenol oxidase E, chloroplastic</fullName>
        <shortName>PPO</shortName>
        <ecNumber>1.10.3.1</ecNumber>
    </recommendedName>
    <alternativeName>
        <fullName>Catechol oxidase</fullName>
    </alternativeName>
</protein>
<comment type="function">
    <text>Catalyzes the oxidation of mono- and o-diphenols to o-diquinones.</text>
</comment>
<comment type="catalytic activity">
    <reaction>
        <text>2 catechol + O2 = 2 1,2-benzoquinone + 2 H2O</text>
        <dbReference type="Rhea" id="RHEA:21632"/>
        <dbReference type="ChEBI" id="CHEBI:15377"/>
        <dbReference type="ChEBI" id="CHEBI:15379"/>
        <dbReference type="ChEBI" id="CHEBI:17253"/>
        <dbReference type="ChEBI" id="CHEBI:18135"/>
        <dbReference type="EC" id="1.10.3.1"/>
    </reaction>
</comment>
<comment type="cofactor">
    <cofactor evidence="1">
        <name>Cu(2+)</name>
        <dbReference type="ChEBI" id="CHEBI:29036"/>
    </cofactor>
    <text evidence="1">Binds 2 copper ions per subunit.</text>
</comment>
<comment type="subcellular location">
    <subcellularLocation>
        <location>Plastid</location>
        <location>Chloroplast thylakoid lumen</location>
    </subcellularLocation>
</comment>
<comment type="similarity">
    <text evidence="2">Belongs to the tyrosinase family.</text>
</comment>
<evidence type="ECO:0000250" key="1">
    <source>
        <dbReference type="UniProtKB" id="Q9ZP19"/>
    </source>
</evidence>
<evidence type="ECO:0000305" key="2"/>
<feature type="transit peptide" description="Chloroplast">
    <location>
        <begin position="1"/>
        <end position="87"/>
    </location>
</feature>
<feature type="chain" id="PRO_0000035914" description="Polyphenol oxidase E, chloroplastic">
    <location>
        <begin position="88"/>
        <end position="587"/>
    </location>
</feature>
<feature type="binding site" evidence="1">
    <location>
        <position position="179"/>
    </location>
    <ligand>
        <name>Cu cation</name>
        <dbReference type="ChEBI" id="CHEBI:23378"/>
        <label>A</label>
    </ligand>
</feature>
<feature type="binding site" evidence="1">
    <location>
        <position position="197"/>
    </location>
    <ligand>
        <name>Cu cation</name>
        <dbReference type="ChEBI" id="CHEBI:23378"/>
        <label>A</label>
    </ligand>
</feature>
<feature type="binding site" evidence="1">
    <location>
        <position position="206"/>
    </location>
    <ligand>
        <name>Cu cation</name>
        <dbReference type="ChEBI" id="CHEBI:23378"/>
        <label>A</label>
    </ligand>
</feature>
<feature type="binding site" evidence="1">
    <location>
        <position position="328"/>
    </location>
    <ligand>
        <name>Cu cation</name>
        <dbReference type="ChEBI" id="CHEBI:23378"/>
        <label>B</label>
    </ligand>
</feature>
<feature type="binding site" evidence="1">
    <location>
        <position position="332"/>
    </location>
    <ligand>
        <name>Cu cation</name>
        <dbReference type="ChEBI" id="CHEBI:23378"/>
        <label>B</label>
    </ligand>
</feature>
<feature type="binding site" evidence="1">
    <location>
        <position position="363"/>
    </location>
    <ligand>
        <name>Cu cation</name>
        <dbReference type="ChEBI" id="CHEBI:23378"/>
        <label>B</label>
    </ligand>
</feature>
<feature type="disulfide bond" evidence="1">
    <location>
        <begin position="98"/>
        <end position="114"/>
    </location>
</feature>
<feature type="disulfide bond" evidence="1">
    <location>
        <begin position="113"/>
        <end position="180"/>
    </location>
</feature>
<feature type="cross-link" description="2'-(S-cysteinyl)-histidine (Cys-His)" evidence="1">
    <location>
        <begin position="183"/>
        <end position="197"/>
    </location>
</feature>
<feature type="sequence conflict" description="In Ref. 2; AAB22610." evidence="2" ref="2">
    <original>PLGSE</original>
    <variation>LWVLN</variation>
    <location>
        <begin position="311"/>
        <end position="315"/>
    </location>
</feature>
<feature type="sequence conflict" description="In Ref. 2; AAB22610." evidence="2" ref="2">
    <original>C</original>
    <variation>V</variation>
    <location>
        <position position="410"/>
    </location>
</feature>
<feature type="sequence conflict" description="In Ref. 2; AAB22610." evidence="2" ref="2">
    <original>L</original>
    <variation>V</variation>
    <location>
        <position position="541"/>
    </location>
</feature>
<feature type="sequence conflict" description="In Ref. 2; AAB22610." evidence="2" ref="2">
    <original>V</original>
    <variation>I</variation>
    <location>
        <position position="567"/>
    </location>
</feature>
<feature type="sequence conflict" description="In Ref. 2; AAB22610." evidence="2" ref="2">
    <original>E</original>
    <variation>G</variation>
    <location>
        <position position="574"/>
    </location>
</feature>
<reference key="1">
    <citation type="journal article" date="1993" name="Plant Mol. Biol.">
        <title>Organisation of the tomato polyphenol oxidase gene family.</title>
        <authorList>
            <person name="Newman S.M."/>
            <person name="Eannetta N.T."/>
            <person name="Yu H."/>
            <person name="Prince J.P."/>
            <person name="de Vicente M.C."/>
            <person name="Tanksley S.D."/>
            <person name="Steffens J.C."/>
        </authorList>
    </citation>
    <scope>NUCLEOTIDE SEQUENCE [GENOMIC DNA]</scope>
    <source>
        <strain>cv. VFNT Cherry</strain>
    </source>
</reference>
<reference key="2">
    <citation type="journal article" date="1992" name="Plant Cell">
        <title>The tomato 66.3-kD polyphenoloxidase gene: molecular identification and developmental expression.</title>
        <authorList>
            <person name="Shahar T."/>
            <person name="Hennig N."/>
            <person name="Gutfinger T."/>
            <person name="Hareven D."/>
            <person name="Lifschitz E."/>
        </authorList>
    </citation>
    <scope>NUCLEOTIDE SEQUENCE [GENOMIC DNA]</scope>
    <source>
        <strain>cv. Tiny tim</strain>
    </source>
</reference>
<accession>Q08307</accession>
<accession>Q41175</accession>
<keyword id="KW-0150">Chloroplast</keyword>
<keyword id="KW-0186">Copper</keyword>
<keyword id="KW-1015">Disulfide bond</keyword>
<keyword id="KW-0479">Metal-binding</keyword>
<keyword id="KW-0560">Oxidoreductase</keyword>
<keyword id="KW-0934">Plastid</keyword>
<keyword id="KW-1185">Reference proteome</keyword>
<keyword id="KW-0883">Thioether bond</keyword>
<keyword id="KW-0793">Thylakoid</keyword>
<keyword id="KW-0809">Transit peptide</keyword>
<proteinExistence type="inferred from homology"/>